<name>RL20_CITBB</name>
<sequence length="117" mass="13231">MPRVKRGFKARQRRNKVLKLAKGYRGARSKLFRSATEAVDRALNYAFRDRRVKKRDFRALWITRINAAARINGLSYSKLIHGLKLANVEIDRKVMADLAVSDPNGFAAIAAAAKAKF</sequence>
<comment type="function">
    <text evidence="1">Binds directly to 23S ribosomal RNA and is necessary for the in vitro assembly process of the 50S ribosomal subunit. It is not involved in the protein synthesizing functions of that subunit.</text>
</comment>
<comment type="similarity">
    <text evidence="1">Belongs to the bacterial ribosomal protein bL20 family.</text>
</comment>
<keyword id="KW-1185">Reference proteome</keyword>
<keyword id="KW-0687">Ribonucleoprotein</keyword>
<keyword id="KW-0689">Ribosomal protein</keyword>
<keyword id="KW-0694">RNA-binding</keyword>
<keyword id="KW-0699">rRNA-binding</keyword>
<gene>
    <name evidence="1" type="primary">rplT</name>
    <name type="ordered locus">Gbem_1993</name>
</gene>
<reference key="1">
    <citation type="submission" date="2008-07" db="EMBL/GenBank/DDBJ databases">
        <title>Complete sequence of Geobacter bemidjiensis BEM.</title>
        <authorList>
            <consortium name="US DOE Joint Genome Institute"/>
            <person name="Lucas S."/>
            <person name="Copeland A."/>
            <person name="Lapidus A."/>
            <person name="Glavina del Rio T."/>
            <person name="Dalin E."/>
            <person name="Tice H."/>
            <person name="Bruce D."/>
            <person name="Goodwin L."/>
            <person name="Pitluck S."/>
            <person name="Kiss H."/>
            <person name="Brettin T."/>
            <person name="Detter J.C."/>
            <person name="Han C."/>
            <person name="Kuske C.R."/>
            <person name="Schmutz J."/>
            <person name="Larimer F."/>
            <person name="Land M."/>
            <person name="Hauser L."/>
            <person name="Kyrpides N."/>
            <person name="Lykidis A."/>
            <person name="Lovley D."/>
            <person name="Richardson P."/>
        </authorList>
    </citation>
    <scope>NUCLEOTIDE SEQUENCE [LARGE SCALE GENOMIC DNA]</scope>
    <source>
        <strain>ATCC BAA-1014 / DSM 16622 / JCM 12645 / Bem</strain>
    </source>
</reference>
<accession>B5EBY2</accession>
<feature type="chain" id="PRO_1000122321" description="Large ribosomal subunit protein bL20">
    <location>
        <begin position="1"/>
        <end position="117"/>
    </location>
</feature>
<organism>
    <name type="scientific">Citrifermentans bemidjiense (strain ATCC BAA-1014 / DSM 16622 / JCM 12645 / Bem)</name>
    <name type="common">Geobacter bemidjiensis</name>
    <dbReference type="NCBI Taxonomy" id="404380"/>
    <lineage>
        <taxon>Bacteria</taxon>
        <taxon>Pseudomonadati</taxon>
        <taxon>Thermodesulfobacteriota</taxon>
        <taxon>Desulfuromonadia</taxon>
        <taxon>Geobacterales</taxon>
        <taxon>Geobacteraceae</taxon>
        <taxon>Citrifermentans</taxon>
    </lineage>
</organism>
<dbReference type="EMBL" id="CP001124">
    <property type="protein sequence ID" value="ACH39006.1"/>
    <property type="molecule type" value="Genomic_DNA"/>
</dbReference>
<dbReference type="RefSeq" id="WP_012530425.1">
    <property type="nucleotide sequence ID" value="NC_011146.1"/>
</dbReference>
<dbReference type="SMR" id="B5EBY2"/>
<dbReference type="STRING" id="404380.Gbem_1993"/>
<dbReference type="KEGG" id="gbm:Gbem_1993"/>
<dbReference type="eggNOG" id="COG0292">
    <property type="taxonomic scope" value="Bacteria"/>
</dbReference>
<dbReference type="HOGENOM" id="CLU_123265_0_1_7"/>
<dbReference type="OrthoDB" id="9808966at2"/>
<dbReference type="Proteomes" id="UP000008825">
    <property type="component" value="Chromosome"/>
</dbReference>
<dbReference type="GO" id="GO:1990904">
    <property type="term" value="C:ribonucleoprotein complex"/>
    <property type="evidence" value="ECO:0007669"/>
    <property type="project" value="UniProtKB-KW"/>
</dbReference>
<dbReference type="GO" id="GO:0005840">
    <property type="term" value="C:ribosome"/>
    <property type="evidence" value="ECO:0007669"/>
    <property type="project" value="UniProtKB-KW"/>
</dbReference>
<dbReference type="GO" id="GO:0019843">
    <property type="term" value="F:rRNA binding"/>
    <property type="evidence" value="ECO:0007669"/>
    <property type="project" value="UniProtKB-UniRule"/>
</dbReference>
<dbReference type="GO" id="GO:0003735">
    <property type="term" value="F:structural constituent of ribosome"/>
    <property type="evidence" value="ECO:0007669"/>
    <property type="project" value="InterPro"/>
</dbReference>
<dbReference type="GO" id="GO:0000027">
    <property type="term" value="P:ribosomal large subunit assembly"/>
    <property type="evidence" value="ECO:0007669"/>
    <property type="project" value="UniProtKB-UniRule"/>
</dbReference>
<dbReference type="GO" id="GO:0006412">
    <property type="term" value="P:translation"/>
    <property type="evidence" value="ECO:0007669"/>
    <property type="project" value="InterPro"/>
</dbReference>
<dbReference type="CDD" id="cd07026">
    <property type="entry name" value="Ribosomal_L20"/>
    <property type="match status" value="1"/>
</dbReference>
<dbReference type="FunFam" id="1.10.1900.20:FF:000001">
    <property type="entry name" value="50S ribosomal protein L20"/>
    <property type="match status" value="1"/>
</dbReference>
<dbReference type="Gene3D" id="6.10.160.10">
    <property type="match status" value="1"/>
</dbReference>
<dbReference type="Gene3D" id="1.10.1900.20">
    <property type="entry name" value="Ribosomal protein L20"/>
    <property type="match status" value="1"/>
</dbReference>
<dbReference type="HAMAP" id="MF_00382">
    <property type="entry name" value="Ribosomal_bL20"/>
    <property type="match status" value="1"/>
</dbReference>
<dbReference type="InterPro" id="IPR005813">
    <property type="entry name" value="Ribosomal_bL20"/>
</dbReference>
<dbReference type="InterPro" id="IPR049946">
    <property type="entry name" value="RIBOSOMAL_L20_CS"/>
</dbReference>
<dbReference type="InterPro" id="IPR035566">
    <property type="entry name" value="Ribosomal_protein_bL20_C"/>
</dbReference>
<dbReference type="NCBIfam" id="TIGR01032">
    <property type="entry name" value="rplT_bact"/>
    <property type="match status" value="1"/>
</dbReference>
<dbReference type="PANTHER" id="PTHR10986">
    <property type="entry name" value="39S RIBOSOMAL PROTEIN L20"/>
    <property type="match status" value="1"/>
</dbReference>
<dbReference type="Pfam" id="PF00453">
    <property type="entry name" value="Ribosomal_L20"/>
    <property type="match status" value="1"/>
</dbReference>
<dbReference type="PRINTS" id="PR00062">
    <property type="entry name" value="RIBOSOMALL20"/>
</dbReference>
<dbReference type="SUPFAM" id="SSF74731">
    <property type="entry name" value="Ribosomal protein L20"/>
    <property type="match status" value="1"/>
</dbReference>
<dbReference type="PROSITE" id="PS00937">
    <property type="entry name" value="RIBOSOMAL_L20"/>
    <property type="match status" value="1"/>
</dbReference>
<proteinExistence type="inferred from homology"/>
<evidence type="ECO:0000255" key="1">
    <source>
        <dbReference type="HAMAP-Rule" id="MF_00382"/>
    </source>
</evidence>
<evidence type="ECO:0000305" key="2"/>
<protein>
    <recommendedName>
        <fullName evidence="1">Large ribosomal subunit protein bL20</fullName>
    </recommendedName>
    <alternativeName>
        <fullName evidence="2">50S ribosomal protein L20</fullName>
    </alternativeName>
</protein>